<evidence type="ECO:0000250" key="1">
    <source>
        <dbReference type="UniProtKB" id="Q96EY8"/>
    </source>
</evidence>
<evidence type="ECO:0000250" key="2">
    <source>
        <dbReference type="UniProtKB" id="Q9D273"/>
    </source>
</evidence>
<evidence type="ECO:0000255" key="3"/>
<evidence type="ECO:0000256" key="4">
    <source>
        <dbReference type="SAM" id="MobiDB-lite"/>
    </source>
</evidence>
<evidence type="ECO:0000269" key="5">
    <source>
    </source>
</evidence>
<evidence type="ECO:0000305" key="6"/>
<evidence type="ECO:0000305" key="7">
    <source>
    </source>
</evidence>
<feature type="transit peptide" description="Mitochondrion" evidence="3">
    <location>
        <begin position="1"/>
        <end position="26"/>
    </location>
</feature>
<feature type="chain" id="PRO_0000238932" description="Corrinoid adenosyltransferase MMAB">
    <location>
        <begin position="27"/>
        <end position="241"/>
    </location>
</feature>
<feature type="region of interest" description="Disordered" evidence="4">
    <location>
        <begin position="27"/>
        <end position="69"/>
    </location>
</feature>
<feature type="binding site" evidence="1">
    <location>
        <begin position="54"/>
        <end position="63"/>
    </location>
    <ligand>
        <name>ATP</name>
        <dbReference type="ChEBI" id="CHEBI:30616"/>
    </ligand>
</feature>
<feature type="binding site" evidence="1">
    <location>
        <position position="72"/>
    </location>
    <ligand>
        <name>ATP</name>
        <dbReference type="ChEBI" id="CHEBI:30616"/>
    </ligand>
</feature>
<feature type="binding site" evidence="1">
    <location>
        <begin position="184"/>
        <end position="188"/>
    </location>
    <ligand>
        <name>ATP</name>
        <dbReference type="ChEBI" id="CHEBI:30616"/>
    </ligand>
</feature>
<feature type="binding site" evidence="1">
    <location>
        <position position="208"/>
    </location>
    <ligand>
        <name>ATP</name>
        <dbReference type="ChEBI" id="CHEBI:30616"/>
    </ligand>
</feature>
<feature type="modified residue" description="Phosphoserine" evidence="1">
    <location>
        <position position="128"/>
    </location>
</feature>
<feature type="modified residue" description="N6-succinyllysine" evidence="2">
    <location>
        <position position="205"/>
    </location>
</feature>
<feature type="modified residue" description="N6-acetyllysine; alternate" evidence="2">
    <location>
        <position position="224"/>
    </location>
</feature>
<feature type="modified residue" description="N6-succinyllysine; alternate" evidence="2">
    <location>
        <position position="224"/>
    </location>
</feature>
<feature type="sequence conflict" description="In Ref. 3; AAI11195." evidence="6" ref="3">
    <original>R</original>
    <variation>S</variation>
    <location>
        <position position="25"/>
    </location>
</feature>
<feature type="sequence conflict" description="In Ref. 3; AAI11195." evidence="6" ref="3">
    <original>A</original>
    <variation>V</variation>
    <location>
        <position position="93"/>
    </location>
</feature>
<feature type="sequence conflict" description="In Ref. 3; AAI11195." evidence="6" ref="3">
    <original>H</original>
    <variation>Q</variation>
    <location>
        <position position="102"/>
    </location>
</feature>
<keyword id="KW-0007">Acetylation</keyword>
<keyword id="KW-0067">ATP-binding</keyword>
<keyword id="KW-0496">Mitochondrion</keyword>
<keyword id="KW-0547">Nucleotide-binding</keyword>
<keyword id="KW-0597">Phosphoprotein</keyword>
<keyword id="KW-1185">Reference proteome</keyword>
<keyword id="KW-0808">Transferase</keyword>
<keyword id="KW-0809">Transit peptide</keyword>
<accession>Q58D49</accession>
<accession>Q2NL20</accession>
<sequence length="241" mass="26587">MAVWGPGGRLGLRGCLGARKLLCPRFQSRGPQGVEDGDRPQPSSKTPKVPKIYTKTGDKGFSSTFTGERRSKDDQVFEAVGTTDELSSAIGFAMELIAEKGHPFVEELQKIQCSLQDVGSALATPRSSAREAHLKHATFEAGPILELEQWIDKYSRQLPPLTAFILPSGGKSSSALHFCRAVCRRAERRVVPLVQTGETDANVVKFLNRLSDYLFTLARYTAMKEGNPEKIYKKNDLSDRT</sequence>
<reference key="1">
    <citation type="journal article" date="2003" name="J. Biol. Chem.">
        <title>Identification of the human and bovine ATP:Cob(I)alamin adenosyltransferase cDNAs based on complementation of a bacterial mutant.</title>
        <authorList>
            <person name="Leal N.A."/>
            <person name="Park S.D."/>
            <person name="Kima P.E."/>
            <person name="Bobik T.A."/>
        </authorList>
    </citation>
    <scope>NUCLEOTIDE SEQUENCE [MRNA]</scope>
    <scope>FUNCTION</scope>
    <scope>CATALYTIC ACTIVITY</scope>
</reference>
<reference key="2">
    <citation type="journal article" date="2005" name="BMC Genomics">
        <title>Characterization of 954 bovine full-CDS cDNA sequences.</title>
        <authorList>
            <person name="Harhay G.P."/>
            <person name="Sonstegard T.S."/>
            <person name="Keele J.W."/>
            <person name="Heaton M.P."/>
            <person name="Clawson M.L."/>
            <person name="Snelling W.M."/>
            <person name="Wiedmann R.T."/>
            <person name="Van Tassell C.P."/>
            <person name="Smith T.P.L."/>
        </authorList>
    </citation>
    <scope>NUCLEOTIDE SEQUENCE [LARGE SCALE MRNA]</scope>
</reference>
<reference key="3">
    <citation type="submission" date="2005-12" db="EMBL/GenBank/DDBJ databases">
        <authorList>
            <consortium name="NIH - Mammalian Gene Collection (MGC) project"/>
        </authorList>
    </citation>
    <scope>NUCLEOTIDE SEQUENCE [LARGE SCALE MRNA]</scope>
    <source>
        <strain>Crossbred X Angus</strain>
        <tissue>Liver</tissue>
    </source>
</reference>
<protein>
    <recommendedName>
        <fullName evidence="6">Corrinoid adenosyltransferase MMAB</fullName>
        <ecNumber evidence="5">2.5.1.-</ecNumber>
    </recommendedName>
    <alternativeName>
        <fullName>ATP:co(I)rrinoid adenosyltransferase MMAB</fullName>
    </alternativeName>
    <alternativeName>
        <fullName>Methylmalonic aciduria type B homolog</fullName>
    </alternativeName>
</protein>
<name>MMAB_BOVIN</name>
<organism>
    <name type="scientific">Bos taurus</name>
    <name type="common">Bovine</name>
    <dbReference type="NCBI Taxonomy" id="9913"/>
    <lineage>
        <taxon>Eukaryota</taxon>
        <taxon>Metazoa</taxon>
        <taxon>Chordata</taxon>
        <taxon>Craniata</taxon>
        <taxon>Vertebrata</taxon>
        <taxon>Euteleostomi</taxon>
        <taxon>Mammalia</taxon>
        <taxon>Eutheria</taxon>
        <taxon>Laurasiatheria</taxon>
        <taxon>Artiodactyla</taxon>
        <taxon>Ruminantia</taxon>
        <taxon>Pecora</taxon>
        <taxon>Bovidae</taxon>
        <taxon>Bovinae</taxon>
        <taxon>Bos</taxon>
    </lineage>
</organism>
<dbReference type="EC" id="2.5.1.-" evidence="5"/>
<dbReference type="EMBL" id="BT021748">
    <property type="protein sequence ID" value="AAX46595.1"/>
    <property type="molecule type" value="mRNA"/>
</dbReference>
<dbReference type="EMBL" id="BC111194">
    <property type="protein sequence ID" value="AAI11195.1"/>
    <property type="molecule type" value="mRNA"/>
</dbReference>
<dbReference type="RefSeq" id="NP_001073100.1">
    <property type="nucleotide sequence ID" value="NM_001079632.1"/>
</dbReference>
<dbReference type="SMR" id="Q58D49"/>
<dbReference type="FunCoup" id="Q58D49">
    <property type="interactions" value="328"/>
</dbReference>
<dbReference type="STRING" id="9913.ENSBTAP00000006821"/>
<dbReference type="PaxDb" id="9913-ENSBTAP00000006821"/>
<dbReference type="GeneID" id="617636"/>
<dbReference type="KEGG" id="bta:617636"/>
<dbReference type="CTD" id="326625"/>
<dbReference type="eggNOG" id="ENOG502QS64">
    <property type="taxonomic scope" value="Eukaryota"/>
</dbReference>
<dbReference type="InParanoid" id="Q58D49"/>
<dbReference type="OrthoDB" id="549173at2759"/>
<dbReference type="Proteomes" id="UP000009136">
    <property type="component" value="Unplaced"/>
</dbReference>
<dbReference type="GO" id="GO:0005739">
    <property type="term" value="C:mitochondrion"/>
    <property type="evidence" value="ECO:0007669"/>
    <property type="project" value="UniProtKB-SubCell"/>
</dbReference>
<dbReference type="GO" id="GO:0005524">
    <property type="term" value="F:ATP binding"/>
    <property type="evidence" value="ECO:0007669"/>
    <property type="project" value="UniProtKB-KW"/>
</dbReference>
<dbReference type="GO" id="GO:0031419">
    <property type="term" value="F:cobalamin binding"/>
    <property type="evidence" value="ECO:0000250"/>
    <property type="project" value="UniProtKB"/>
</dbReference>
<dbReference type="GO" id="GO:0008817">
    <property type="term" value="F:corrinoid adenosyltransferase activity"/>
    <property type="evidence" value="ECO:0000314"/>
    <property type="project" value="MGI"/>
</dbReference>
<dbReference type="GO" id="GO:0016765">
    <property type="term" value="F:transferase activity, transferring alkyl or aryl (other than methyl) groups"/>
    <property type="evidence" value="ECO:0000314"/>
    <property type="project" value="UniProtKB"/>
</dbReference>
<dbReference type="GO" id="GO:0009235">
    <property type="term" value="P:cobalamin metabolic process"/>
    <property type="evidence" value="ECO:0000314"/>
    <property type="project" value="UniProtKB"/>
</dbReference>
<dbReference type="FunFam" id="1.20.1200.10:FF:000001">
    <property type="entry name" value="Cob(I)yrinic acid a,c-diamide adenosyltransferase"/>
    <property type="match status" value="1"/>
</dbReference>
<dbReference type="Gene3D" id="1.20.1200.10">
    <property type="entry name" value="Cobalamin adenosyltransferase-like"/>
    <property type="match status" value="1"/>
</dbReference>
<dbReference type="InterPro" id="IPR016030">
    <property type="entry name" value="CblAdoTrfase-like"/>
</dbReference>
<dbReference type="InterPro" id="IPR036451">
    <property type="entry name" value="CblAdoTrfase-like_sf"/>
</dbReference>
<dbReference type="InterPro" id="IPR029499">
    <property type="entry name" value="PduO-typ"/>
</dbReference>
<dbReference type="NCBIfam" id="TIGR00636">
    <property type="entry name" value="PduO_Nterm"/>
    <property type="match status" value="1"/>
</dbReference>
<dbReference type="PANTHER" id="PTHR12213">
    <property type="entry name" value="CORRINOID ADENOSYLTRANSFERASE"/>
    <property type="match status" value="1"/>
</dbReference>
<dbReference type="PANTHER" id="PTHR12213:SF0">
    <property type="entry name" value="CORRINOID ADENOSYLTRANSFERASE MMAB"/>
    <property type="match status" value="1"/>
</dbReference>
<dbReference type="Pfam" id="PF01923">
    <property type="entry name" value="Cob_adeno_trans"/>
    <property type="match status" value="1"/>
</dbReference>
<dbReference type="SUPFAM" id="SSF89028">
    <property type="entry name" value="Cobalamin adenosyltransferase-like"/>
    <property type="match status" value="1"/>
</dbReference>
<comment type="function">
    <text evidence="1 5">Converts cob(I)alamin to adenosylcobalamin (adenosylcob(III)alamin), a coenzyme for methylmalonyl-CoA mutase, therefore participates in the final step of the vitamin B12 conversion (PubMed:12514191). Generates adenosylcobalamin (AdoCbl) and directly delivers the cofactor to MUT in a transfer that is stimulated by ATP-binding to MMAB and gated by MMAA (By similarity).</text>
</comment>
<comment type="catalytic activity">
    <reaction evidence="5">
        <text>cob(I)alamin-[corrinoid adenosyltransferase] + ATP = apo-[corrinoid adenosyltransferase] + adenosylcob(III)alamin + triphosphate</text>
        <dbReference type="Rhea" id="RHEA:56796"/>
        <dbReference type="Rhea" id="RHEA-COMP:14743"/>
        <dbReference type="Rhea" id="RHEA-COMP:14744"/>
        <dbReference type="ChEBI" id="CHEBI:18036"/>
        <dbReference type="ChEBI" id="CHEBI:18408"/>
        <dbReference type="ChEBI" id="CHEBI:30616"/>
        <dbReference type="ChEBI" id="CHEBI:60488"/>
        <dbReference type="ChEBI" id="CHEBI:83228"/>
    </reaction>
    <physiologicalReaction direction="left-to-right" evidence="7">
        <dbReference type="Rhea" id="RHEA:56797"/>
    </physiologicalReaction>
</comment>
<comment type="subunit">
    <text evidence="1">Homotrimer.</text>
</comment>
<comment type="subcellular location">
    <subcellularLocation>
        <location evidence="1">Mitochondrion</location>
    </subcellularLocation>
</comment>
<comment type="similarity">
    <text evidence="6">Belongs to the Cob(I)alamin adenosyltransferase family.</text>
</comment>
<gene>
    <name evidence="1" type="primary">MMAB</name>
</gene>
<proteinExistence type="evidence at protein level"/>